<organism>
    <name type="scientific">Pediococcus pentosaceus</name>
    <dbReference type="NCBI Taxonomy" id="1255"/>
    <lineage>
        <taxon>Bacteria</taxon>
        <taxon>Bacillati</taxon>
        <taxon>Bacillota</taxon>
        <taxon>Bacilli</taxon>
        <taxon>Lactobacillales</taxon>
        <taxon>Lactobacillaceae</taxon>
        <taxon>Pediococcus</taxon>
    </lineage>
</organism>
<sequence>MDNRPIGFMDSGVGGLTVVKTAQKLLPNEEIIFIGDEARMPYGPRPTAEVVEFSRQMASFLMTKNIKALVIACNTATNAALAVLQAELPIPVIGVILPGAIAANRQTKNQKIGVIATLGTIKSEAYPKALAEINTKLRAYPVACQEFVEIAEKNELHTTAAQKVMNEKLAEFRQDQIDTLILGCTHFPLLEEGIQAAVGPDVTLVDPGVETVHQLIEILTKQALQHAEGPKAQDQYYSTGNIKNFEEIARTFLNQDLRVEEVKID</sequence>
<feature type="chain" id="PRO_0000095496" description="Glutamate racemase">
    <location>
        <begin position="1"/>
        <end position="265"/>
    </location>
</feature>
<feature type="active site" description="Proton donor/acceptor" evidence="1">
    <location>
        <position position="73"/>
    </location>
</feature>
<feature type="active site" description="Proton donor/acceptor" evidence="1">
    <location>
        <position position="184"/>
    </location>
</feature>
<feature type="binding site" evidence="1">
    <location>
        <begin position="10"/>
        <end position="11"/>
    </location>
    <ligand>
        <name>substrate</name>
    </ligand>
</feature>
<feature type="binding site" evidence="1">
    <location>
        <begin position="42"/>
        <end position="43"/>
    </location>
    <ligand>
        <name>substrate</name>
    </ligand>
</feature>
<feature type="binding site" evidence="1">
    <location>
        <begin position="74"/>
        <end position="75"/>
    </location>
    <ligand>
        <name>substrate</name>
    </ligand>
</feature>
<feature type="binding site" evidence="1">
    <location>
        <begin position="185"/>
        <end position="186"/>
    </location>
    <ligand>
        <name>substrate</name>
    </ligand>
</feature>
<gene>
    <name evidence="1" type="primary">murI</name>
</gene>
<accession>Q08783</accession>
<name>MURI_PEDPE</name>
<evidence type="ECO:0000255" key="1">
    <source>
        <dbReference type="HAMAP-Rule" id="MF_00258"/>
    </source>
</evidence>
<protein>
    <recommendedName>
        <fullName evidence="1">Glutamate racemase</fullName>
        <ecNumber evidence="1">5.1.1.3</ecNumber>
    </recommendedName>
</protein>
<keyword id="KW-0133">Cell shape</keyword>
<keyword id="KW-0961">Cell wall biogenesis/degradation</keyword>
<keyword id="KW-0413">Isomerase</keyword>
<keyword id="KW-0573">Peptidoglycan synthesis</keyword>
<proteinExistence type="inferred from homology"/>
<dbReference type="EC" id="5.1.1.3" evidence="1"/>
<dbReference type="EMBL" id="L22789">
    <property type="protein sequence ID" value="AAA16761.1"/>
    <property type="molecule type" value="Unassigned_DNA"/>
</dbReference>
<dbReference type="EMBL" id="L22448">
    <property type="protein sequence ID" value="AAC36914.1"/>
    <property type="molecule type" value="Genomic_DNA"/>
</dbReference>
<dbReference type="RefSeq" id="WP_011673575.1">
    <property type="nucleotide sequence ID" value="NZ_WEPA01000004.1"/>
</dbReference>
<dbReference type="SMR" id="Q08783"/>
<dbReference type="GeneID" id="33061810"/>
<dbReference type="OMA" id="LDFFKPH"/>
<dbReference type="UniPathway" id="UPA00219"/>
<dbReference type="GO" id="GO:0008881">
    <property type="term" value="F:glutamate racemase activity"/>
    <property type="evidence" value="ECO:0007669"/>
    <property type="project" value="UniProtKB-UniRule"/>
</dbReference>
<dbReference type="GO" id="GO:0071555">
    <property type="term" value="P:cell wall organization"/>
    <property type="evidence" value="ECO:0007669"/>
    <property type="project" value="UniProtKB-KW"/>
</dbReference>
<dbReference type="GO" id="GO:0009252">
    <property type="term" value="P:peptidoglycan biosynthetic process"/>
    <property type="evidence" value="ECO:0007669"/>
    <property type="project" value="UniProtKB-UniRule"/>
</dbReference>
<dbReference type="GO" id="GO:0008360">
    <property type="term" value="P:regulation of cell shape"/>
    <property type="evidence" value="ECO:0007669"/>
    <property type="project" value="UniProtKB-KW"/>
</dbReference>
<dbReference type="FunFam" id="3.40.50.1860:FF:000002">
    <property type="entry name" value="Glutamate racemase"/>
    <property type="match status" value="1"/>
</dbReference>
<dbReference type="Gene3D" id="3.40.50.1860">
    <property type="match status" value="2"/>
</dbReference>
<dbReference type="HAMAP" id="MF_00258">
    <property type="entry name" value="Glu_racemase"/>
    <property type="match status" value="1"/>
</dbReference>
<dbReference type="InterPro" id="IPR015942">
    <property type="entry name" value="Asp/Glu/hydantoin_racemase"/>
</dbReference>
<dbReference type="InterPro" id="IPR001920">
    <property type="entry name" value="Asp/Glu_race"/>
</dbReference>
<dbReference type="InterPro" id="IPR018187">
    <property type="entry name" value="Asp/Glu_racemase_AS_1"/>
</dbReference>
<dbReference type="InterPro" id="IPR033134">
    <property type="entry name" value="Asp/Glu_racemase_AS_2"/>
</dbReference>
<dbReference type="InterPro" id="IPR004391">
    <property type="entry name" value="Glu_race"/>
</dbReference>
<dbReference type="NCBIfam" id="TIGR00067">
    <property type="entry name" value="glut_race"/>
    <property type="match status" value="1"/>
</dbReference>
<dbReference type="PANTHER" id="PTHR21198">
    <property type="entry name" value="GLUTAMATE RACEMASE"/>
    <property type="match status" value="1"/>
</dbReference>
<dbReference type="PANTHER" id="PTHR21198:SF2">
    <property type="entry name" value="GLUTAMATE RACEMASE"/>
    <property type="match status" value="1"/>
</dbReference>
<dbReference type="Pfam" id="PF01177">
    <property type="entry name" value="Asp_Glu_race"/>
    <property type="match status" value="1"/>
</dbReference>
<dbReference type="SUPFAM" id="SSF53681">
    <property type="entry name" value="Aspartate/glutamate racemase"/>
    <property type="match status" value="2"/>
</dbReference>
<dbReference type="PROSITE" id="PS00923">
    <property type="entry name" value="ASP_GLU_RACEMASE_1"/>
    <property type="match status" value="1"/>
</dbReference>
<dbReference type="PROSITE" id="PS00924">
    <property type="entry name" value="ASP_GLU_RACEMASE_2"/>
    <property type="match status" value="1"/>
</dbReference>
<reference key="1">
    <citation type="journal article" date="1994" name="J. Bacteriol.">
        <title>The Escherichia coli Dga (MurI) protein shares biological activity and structural domains with the Pediococcus pentosaceus glutamate racemase.</title>
        <authorList>
            <person name="Pucci M.J."/>
            <person name="Novotny J."/>
            <person name="Discotto L.F."/>
            <person name="Dougherty T.J."/>
        </authorList>
    </citation>
    <scope>NUCLEOTIDE SEQUENCE [GENOMIC DNA]</scope>
</reference>
<reference key="2">
    <citation type="journal article" date="1994" name="Proc. Natl. Acad. Sci. U.S.A.">
        <title>Bacterial glutamate racemase has high sequence similarity with myoglobins and forms an equimolar inactive complex with hemin.</title>
        <authorList>
            <person name="Choi S."/>
            <person name="Esaki N."/>
            <person name="Ashiuchi M."/>
            <person name="Yoshimura T."/>
            <person name="Soda K."/>
        </authorList>
    </citation>
    <scope>NUCLEOTIDE SEQUENCE [GENOMIC DNA]</scope>
</reference>
<comment type="function">
    <text evidence="1">Provides the (R)-glutamate required for cell wall biosynthesis.</text>
</comment>
<comment type="catalytic activity">
    <reaction evidence="1">
        <text>L-glutamate = D-glutamate</text>
        <dbReference type="Rhea" id="RHEA:12813"/>
        <dbReference type="ChEBI" id="CHEBI:29985"/>
        <dbReference type="ChEBI" id="CHEBI:29986"/>
        <dbReference type="EC" id="5.1.1.3"/>
    </reaction>
</comment>
<comment type="pathway">
    <text evidence="1">Cell wall biogenesis; peptidoglycan biosynthesis.</text>
</comment>
<comment type="similarity">
    <text evidence="1">Belongs to the aspartate/glutamate racemases family.</text>
</comment>